<accession>B3QBY5</accession>
<gene>
    <name evidence="2" type="primary">rpsL</name>
    <name type="ordered locus">Rpal_3672</name>
</gene>
<dbReference type="EMBL" id="CP001096">
    <property type="protein sequence ID" value="ACF02172.1"/>
    <property type="molecule type" value="Genomic_DNA"/>
</dbReference>
<dbReference type="RefSeq" id="WP_008969396.1">
    <property type="nucleotide sequence ID" value="NC_011004.1"/>
</dbReference>
<dbReference type="SMR" id="B3QBY5"/>
<dbReference type="GeneID" id="66894341"/>
<dbReference type="KEGG" id="rpt:Rpal_3672"/>
<dbReference type="HOGENOM" id="CLU_104295_1_2_5"/>
<dbReference type="OrthoDB" id="9802366at2"/>
<dbReference type="Proteomes" id="UP000001725">
    <property type="component" value="Chromosome"/>
</dbReference>
<dbReference type="GO" id="GO:0015935">
    <property type="term" value="C:small ribosomal subunit"/>
    <property type="evidence" value="ECO:0007669"/>
    <property type="project" value="InterPro"/>
</dbReference>
<dbReference type="GO" id="GO:0019843">
    <property type="term" value="F:rRNA binding"/>
    <property type="evidence" value="ECO:0007669"/>
    <property type="project" value="UniProtKB-UniRule"/>
</dbReference>
<dbReference type="GO" id="GO:0003735">
    <property type="term" value="F:structural constituent of ribosome"/>
    <property type="evidence" value="ECO:0007669"/>
    <property type="project" value="InterPro"/>
</dbReference>
<dbReference type="GO" id="GO:0000049">
    <property type="term" value="F:tRNA binding"/>
    <property type="evidence" value="ECO:0007669"/>
    <property type="project" value="UniProtKB-UniRule"/>
</dbReference>
<dbReference type="GO" id="GO:0006412">
    <property type="term" value="P:translation"/>
    <property type="evidence" value="ECO:0007669"/>
    <property type="project" value="UniProtKB-UniRule"/>
</dbReference>
<dbReference type="CDD" id="cd03368">
    <property type="entry name" value="Ribosomal_S12"/>
    <property type="match status" value="1"/>
</dbReference>
<dbReference type="FunFam" id="2.40.50.140:FF:000001">
    <property type="entry name" value="30S ribosomal protein S12"/>
    <property type="match status" value="1"/>
</dbReference>
<dbReference type="Gene3D" id="2.40.50.140">
    <property type="entry name" value="Nucleic acid-binding proteins"/>
    <property type="match status" value="1"/>
</dbReference>
<dbReference type="HAMAP" id="MF_00403_B">
    <property type="entry name" value="Ribosomal_uS12_B"/>
    <property type="match status" value="1"/>
</dbReference>
<dbReference type="InterPro" id="IPR012340">
    <property type="entry name" value="NA-bd_OB-fold"/>
</dbReference>
<dbReference type="InterPro" id="IPR006032">
    <property type="entry name" value="Ribosomal_uS12"/>
</dbReference>
<dbReference type="InterPro" id="IPR005679">
    <property type="entry name" value="Ribosomal_uS12_bac"/>
</dbReference>
<dbReference type="NCBIfam" id="TIGR00981">
    <property type="entry name" value="rpsL_bact"/>
    <property type="match status" value="1"/>
</dbReference>
<dbReference type="PANTHER" id="PTHR11652">
    <property type="entry name" value="30S RIBOSOMAL PROTEIN S12 FAMILY MEMBER"/>
    <property type="match status" value="1"/>
</dbReference>
<dbReference type="Pfam" id="PF00164">
    <property type="entry name" value="Ribosom_S12_S23"/>
    <property type="match status" value="1"/>
</dbReference>
<dbReference type="PIRSF" id="PIRSF002133">
    <property type="entry name" value="Ribosomal_S12/S23"/>
    <property type="match status" value="1"/>
</dbReference>
<dbReference type="PRINTS" id="PR01034">
    <property type="entry name" value="RIBOSOMALS12"/>
</dbReference>
<dbReference type="SUPFAM" id="SSF50249">
    <property type="entry name" value="Nucleic acid-binding proteins"/>
    <property type="match status" value="1"/>
</dbReference>
<dbReference type="PROSITE" id="PS00055">
    <property type="entry name" value="RIBOSOMAL_S12"/>
    <property type="match status" value="1"/>
</dbReference>
<reference key="1">
    <citation type="submission" date="2008-05" db="EMBL/GenBank/DDBJ databases">
        <title>Complete sequence of Rhodopseudomonas palustris TIE-1.</title>
        <authorList>
            <consortium name="US DOE Joint Genome Institute"/>
            <person name="Lucas S."/>
            <person name="Copeland A."/>
            <person name="Lapidus A."/>
            <person name="Glavina del Rio T."/>
            <person name="Dalin E."/>
            <person name="Tice H."/>
            <person name="Pitluck S."/>
            <person name="Chain P."/>
            <person name="Malfatti S."/>
            <person name="Shin M."/>
            <person name="Vergez L."/>
            <person name="Lang D."/>
            <person name="Schmutz J."/>
            <person name="Larimer F."/>
            <person name="Land M."/>
            <person name="Hauser L."/>
            <person name="Kyrpides N."/>
            <person name="Mikhailova N."/>
            <person name="Emerson D."/>
            <person name="Newman D.K."/>
            <person name="Roden E."/>
            <person name="Richardson P."/>
        </authorList>
    </citation>
    <scope>NUCLEOTIDE SEQUENCE [LARGE SCALE GENOMIC DNA]</scope>
    <source>
        <strain>TIE-1</strain>
    </source>
</reference>
<name>RS12_RHOPT</name>
<sequence>MPTINQLIANPRVVQKSRKKVPALQQSPQKRGVCTRVYTTTPKKPNSALRKVAKVRLTNGFEVIGYIPGEGHNLQEHSVVMIRGGRVKDLPGVRYHILRGVLDTQGVKNRKQRRSKYGAKRPK</sequence>
<comment type="function">
    <text evidence="2">With S4 and S5 plays an important role in translational accuracy.</text>
</comment>
<comment type="function">
    <text evidence="2">Interacts with and stabilizes bases of the 16S rRNA that are involved in tRNA selection in the A site and with the mRNA backbone. Located at the interface of the 30S and 50S subunits, it traverses the body of the 30S subunit contacting proteins on the other side and probably holding the rRNA structure together. The combined cluster of proteins S8, S12 and S17 appears to hold together the shoulder and platform of the 30S subunit.</text>
</comment>
<comment type="subunit">
    <text evidence="2">Part of the 30S ribosomal subunit. Contacts proteins S8 and S17. May interact with IF1 in the 30S initiation complex.</text>
</comment>
<comment type="similarity">
    <text evidence="2">Belongs to the universal ribosomal protein uS12 family.</text>
</comment>
<feature type="chain" id="PRO_1000123508" description="Small ribosomal subunit protein uS12">
    <location>
        <begin position="1"/>
        <end position="123"/>
    </location>
</feature>
<feature type="modified residue" description="3-methylthioaspartic acid" evidence="1">
    <location>
        <position position="89"/>
    </location>
</feature>
<evidence type="ECO:0000250" key="1"/>
<evidence type="ECO:0000255" key="2">
    <source>
        <dbReference type="HAMAP-Rule" id="MF_00403"/>
    </source>
</evidence>
<evidence type="ECO:0000305" key="3"/>
<proteinExistence type="inferred from homology"/>
<protein>
    <recommendedName>
        <fullName evidence="2">Small ribosomal subunit protein uS12</fullName>
    </recommendedName>
    <alternativeName>
        <fullName evidence="3">30S ribosomal protein S12</fullName>
    </alternativeName>
</protein>
<keyword id="KW-0488">Methylation</keyword>
<keyword id="KW-0687">Ribonucleoprotein</keyword>
<keyword id="KW-0689">Ribosomal protein</keyword>
<keyword id="KW-0694">RNA-binding</keyword>
<keyword id="KW-0699">rRNA-binding</keyword>
<keyword id="KW-0820">tRNA-binding</keyword>
<organism>
    <name type="scientific">Rhodopseudomonas palustris (strain TIE-1)</name>
    <dbReference type="NCBI Taxonomy" id="395960"/>
    <lineage>
        <taxon>Bacteria</taxon>
        <taxon>Pseudomonadati</taxon>
        <taxon>Pseudomonadota</taxon>
        <taxon>Alphaproteobacteria</taxon>
        <taxon>Hyphomicrobiales</taxon>
        <taxon>Nitrobacteraceae</taxon>
        <taxon>Rhodopseudomonas</taxon>
    </lineage>
</organism>